<evidence type="ECO:0000255" key="1">
    <source>
        <dbReference type="HAMAP-Rule" id="MF_01333"/>
    </source>
</evidence>
<evidence type="ECO:0000305" key="2"/>
<gene>
    <name evidence="1" type="primary">rplE</name>
    <name type="ordered locus">RrIowa_1185</name>
</gene>
<dbReference type="EMBL" id="CP000766">
    <property type="protein sequence ID" value="ABY72958.1"/>
    <property type="molecule type" value="Genomic_DNA"/>
</dbReference>
<dbReference type="RefSeq" id="WP_012151144.1">
    <property type="nucleotide sequence ID" value="NC_010263.3"/>
</dbReference>
<dbReference type="SMR" id="B0BUP8"/>
<dbReference type="GeneID" id="79937658"/>
<dbReference type="KEGG" id="rrj:RrIowa_1185"/>
<dbReference type="eggNOG" id="COG0094">
    <property type="taxonomic scope" value="Bacteria"/>
</dbReference>
<dbReference type="HOGENOM" id="CLU_061015_2_1_5"/>
<dbReference type="Proteomes" id="UP000000796">
    <property type="component" value="Chromosome"/>
</dbReference>
<dbReference type="GO" id="GO:1990904">
    <property type="term" value="C:ribonucleoprotein complex"/>
    <property type="evidence" value="ECO:0007669"/>
    <property type="project" value="UniProtKB-KW"/>
</dbReference>
<dbReference type="GO" id="GO:0005840">
    <property type="term" value="C:ribosome"/>
    <property type="evidence" value="ECO:0007669"/>
    <property type="project" value="UniProtKB-KW"/>
</dbReference>
<dbReference type="GO" id="GO:0019843">
    <property type="term" value="F:rRNA binding"/>
    <property type="evidence" value="ECO:0007669"/>
    <property type="project" value="UniProtKB-UniRule"/>
</dbReference>
<dbReference type="GO" id="GO:0003735">
    <property type="term" value="F:structural constituent of ribosome"/>
    <property type="evidence" value="ECO:0007669"/>
    <property type="project" value="InterPro"/>
</dbReference>
<dbReference type="GO" id="GO:0000049">
    <property type="term" value="F:tRNA binding"/>
    <property type="evidence" value="ECO:0007669"/>
    <property type="project" value="UniProtKB-UniRule"/>
</dbReference>
<dbReference type="GO" id="GO:0006412">
    <property type="term" value="P:translation"/>
    <property type="evidence" value="ECO:0007669"/>
    <property type="project" value="UniProtKB-UniRule"/>
</dbReference>
<dbReference type="FunFam" id="3.30.1440.10:FF:000001">
    <property type="entry name" value="50S ribosomal protein L5"/>
    <property type="match status" value="1"/>
</dbReference>
<dbReference type="Gene3D" id="3.30.1440.10">
    <property type="match status" value="1"/>
</dbReference>
<dbReference type="HAMAP" id="MF_01333_B">
    <property type="entry name" value="Ribosomal_uL5_B"/>
    <property type="match status" value="1"/>
</dbReference>
<dbReference type="InterPro" id="IPR002132">
    <property type="entry name" value="Ribosomal_uL5"/>
</dbReference>
<dbReference type="InterPro" id="IPR020930">
    <property type="entry name" value="Ribosomal_uL5_bac-type"/>
</dbReference>
<dbReference type="InterPro" id="IPR031309">
    <property type="entry name" value="Ribosomal_uL5_C"/>
</dbReference>
<dbReference type="InterPro" id="IPR020929">
    <property type="entry name" value="Ribosomal_uL5_CS"/>
</dbReference>
<dbReference type="InterPro" id="IPR022803">
    <property type="entry name" value="Ribosomal_uL5_dom_sf"/>
</dbReference>
<dbReference type="InterPro" id="IPR031310">
    <property type="entry name" value="Ribosomal_uL5_N"/>
</dbReference>
<dbReference type="NCBIfam" id="NF000585">
    <property type="entry name" value="PRK00010.1"/>
    <property type="match status" value="1"/>
</dbReference>
<dbReference type="PANTHER" id="PTHR11994">
    <property type="entry name" value="60S RIBOSOMAL PROTEIN L11-RELATED"/>
    <property type="match status" value="1"/>
</dbReference>
<dbReference type="Pfam" id="PF00281">
    <property type="entry name" value="Ribosomal_L5"/>
    <property type="match status" value="1"/>
</dbReference>
<dbReference type="Pfam" id="PF00673">
    <property type="entry name" value="Ribosomal_L5_C"/>
    <property type="match status" value="1"/>
</dbReference>
<dbReference type="PIRSF" id="PIRSF002161">
    <property type="entry name" value="Ribosomal_L5"/>
    <property type="match status" value="1"/>
</dbReference>
<dbReference type="SUPFAM" id="SSF55282">
    <property type="entry name" value="RL5-like"/>
    <property type="match status" value="1"/>
</dbReference>
<dbReference type="PROSITE" id="PS00358">
    <property type="entry name" value="RIBOSOMAL_L5"/>
    <property type="match status" value="1"/>
</dbReference>
<organism>
    <name type="scientific">Rickettsia rickettsii (strain Iowa)</name>
    <dbReference type="NCBI Taxonomy" id="452659"/>
    <lineage>
        <taxon>Bacteria</taxon>
        <taxon>Pseudomonadati</taxon>
        <taxon>Pseudomonadota</taxon>
        <taxon>Alphaproteobacteria</taxon>
        <taxon>Rickettsiales</taxon>
        <taxon>Rickettsiaceae</taxon>
        <taxon>Rickettsieae</taxon>
        <taxon>Rickettsia</taxon>
        <taxon>spotted fever group</taxon>
    </lineage>
</organism>
<name>RL5_RICRO</name>
<proteinExistence type="inferred from homology"/>
<keyword id="KW-0687">Ribonucleoprotein</keyword>
<keyword id="KW-0689">Ribosomal protein</keyword>
<keyword id="KW-0694">RNA-binding</keyword>
<keyword id="KW-0699">rRNA-binding</keyword>
<keyword id="KW-0820">tRNA-binding</keyword>
<feature type="chain" id="PRO_1000086602" description="Large ribosomal subunit protein uL5">
    <location>
        <begin position="1"/>
        <end position="179"/>
    </location>
</feature>
<accession>B0BUP8</accession>
<sequence length="179" mass="20669">MLRFKELYQQKIIENLQKKFSYKNKHEIPQIKKIVINMGVGEATANSKVINNAVNDLTLISGQKPVVTLARKSIATFKLRENMKIGCKVTLRKDRMYDFLERLVIVALPRVKEFRGFSYKSFDGKGNFTFGLKEQIVFPEINYDKIDTIRGMDITIVTSAKTDQESKFLLSGFNLPFYN</sequence>
<comment type="function">
    <text evidence="1">This is one of the proteins that bind and probably mediate the attachment of the 5S RNA into the large ribosomal subunit, where it forms part of the central protuberance. In the 70S ribosome it contacts protein S13 of the 30S subunit (bridge B1b), connecting the 2 subunits; this bridge is implicated in subunit movement. Contacts the P site tRNA; the 5S rRNA and some of its associated proteins might help stabilize positioning of ribosome-bound tRNAs.</text>
</comment>
<comment type="subunit">
    <text evidence="1">Part of the 50S ribosomal subunit; part of the 5S rRNA/L5/L18/L25 subcomplex. Contacts the 5S rRNA and the P site tRNA. Forms a bridge to the 30S subunit in the 70S ribosome.</text>
</comment>
<comment type="similarity">
    <text evidence="1">Belongs to the universal ribosomal protein uL5 family.</text>
</comment>
<protein>
    <recommendedName>
        <fullName evidence="1">Large ribosomal subunit protein uL5</fullName>
    </recommendedName>
    <alternativeName>
        <fullName evidence="2">50S ribosomal protein L5</fullName>
    </alternativeName>
</protein>
<reference key="1">
    <citation type="journal article" date="2008" name="Infect. Immun.">
        <title>Genomic comparison of virulent Rickettsia rickettsii Sheila Smith and avirulent Rickettsia rickettsii Iowa.</title>
        <authorList>
            <person name="Ellison D.W."/>
            <person name="Clark T.R."/>
            <person name="Sturdevant D.E."/>
            <person name="Virtaneva K."/>
            <person name="Porcella S.F."/>
            <person name="Hackstadt T."/>
        </authorList>
    </citation>
    <scope>NUCLEOTIDE SEQUENCE [LARGE SCALE GENOMIC DNA]</scope>
    <source>
        <strain>Iowa</strain>
    </source>
</reference>